<accession>Q3YRL6</accession>
<evidence type="ECO:0000255" key="1">
    <source>
        <dbReference type="HAMAP-Rule" id="MF_01342"/>
    </source>
</evidence>
<evidence type="ECO:0000305" key="2"/>
<dbReference type="EMBL" id="CP000107">
    <property type="protein sequence ID" value="AAZ68639.1"/>
    <property type="molecule type" value="Genomic_DNA"/>
</dbReference>
<dbReference type="RefSeq" id="WP_011304717.1">
    <property type="nucleotide sequence ID" value="NC_007354.1"/>
</dbReference>
<dbReference type="SMR" id="Q3YRL6"/>
<dbReference type="FunCoup" id="Q3YRL6">
    <property type="interactions" value="331"/>
</dbReference>
<dbReference type="STRING" id="269484.Ecaj_0605"/>
<dbReference type="KEGG" id="ecn:Ecaj_0605"/>
<dbReference type="eggNOG" id="COG0197">
    <property type="taxonomic scope" value="Bacteria"/>
</dbReference>
<dbReference type="HOGENOM" id="CLU_078858_2_1_5"/>
<dbReference type="InParanoid" id="Q3YRL6"/>
<dbReference type="Proteomes" id="UP000000435">
    <property type="component" value="Chromosome"/>
</dbReference>
<dbReference type="GO" id="GO:0022625">
    <property type="term" value="C:cytosolic large ribosomal subunit"/>
    <property type="evidence" value="ECO:0007669"/>
    <property type="project" value="TreeGrafter"/>
</dbReference>
<dbReference type="GO" id="GO:0019843">
    <property type="term" value="F:rRNA binding"/>
    <property type="evidence" value="ECO:0007669"/>
    <property type="project" value="UniProtKB-UniRule"/>
</dbReference>
<dbReference type="GO" id="GO:0003735">
    <property type="term" value="F:structural constituent of ribosome"/>
    <property type="evidence" value="ECO:0007669"/>
    <property type="project" value="InterPro"/>
</dbReference>
<dbReference type="GO" id="GO:0000049">
    <property type="term" value="F:tRNA binding"/>
    <property type="evidence" value="ECO:0007669"/>
    <property type="project" value="UniProtKB-KW"/>
</dbReference>
<dbReference type="GO" id="GO:0006412">
    <property type="term" value="P:translation"/>
    <property type="evidence" value="ECO:0007669"/>
    <property type="project" value="UniProtKB-UniRule"/>
</dbReference>
<dbReference type="CDD" id="cd01433">
    <property type="entry name" value="Ribosomal_L16_L10e"/>
    <property type="match status" value="1"/>
</dbReference>
<dbReference type="FunFam" id="3.90.1170.10:FF:000001">
    <property type="entry name" value="50S ribosomal protein L16"/>
    <property type="match status" value="1"/>
</dbReference>
<dbReference type="Gene3D" id="3.90.1170.10">
    <property type="entry name" value="Ribosomal protein L10e/L16"/>
    <property type="match status" value="1"/>
</dbReference>
<dbReference type="HAMAP" id="MF_01342">
    <property type="entry name" value="Ribosomal_uL16"/>
    <property type="match status" value="1"/>
</dbReference>
<dbReference type="InterPro" id="IPR047873">
    <property type="entry name" value="Ribosomal_uL16"/>
</dbReference>
<dbReference type="InterPro" id="IPR000114">
    <property type="entry name" value="Ribosomal_uL16_bact-type"/>
</dbReference>
<dbReference type="InterPro" id="IPR020798">
    <property type="entry name" value="Ribosomal_uL16_CS"/>
</dbReference>
<dbReference type="InterPro" id="IPR016180">
    <property type="entry name" value="Ribosomal_uL16_dom"/>
</dbReference>
<dbReference type="InterPro" id="IPR036920">
    <property type="entry name" value="Ribosomal_uL16_sf"/>
</dbReference>
<dbReference type="NCBIfam" id="TIGR01164">
    <property type="entry name" value="rplP_bact"/>
    <property type="match status" value="1"/>
</dbReference>
<dbReference type="PANTHER" id="PTHR12220">
    <property type="entry name" value="50S/60S RIBOSOMAL PROTEIN L16"/>
    <property type="match status" value="1"/>
</dbReference>
<dbReference type="PANTHER" id="PTHR12220:SF13">
    <property type="entry name" value="LARGE RIBOSOMAL SUBUNIT PROTEIN UL16M"/>
    <property type="match status" value="1"/>
</dbReference>
<dbReference type="Pfam" id="PF00252">
    <property type="entry name" value="Ribosomal_L16"/>
    <property type="match status" value="1"/>
</dbReference>
<dbReference type="PRINTS" id="PR00060">
    <property type="entry name" value="RIBOSOMALL16"/>
</dbReference>
<dbReference type="SUPFAM" id="SSF54686">
    <property type="entry name" value="Ribosomal protein L16p/L10e"/>
    <property type="match status" value="1"/>
</dbReference>
<dbReference type="PROSITE" id="PS00701">
    <property type="entry name" value="RIBOSOMAL_L16_2"/>
    <property type="match status" value="1"/>
</dbReference>
<keyword id="KW-0687">Ribonucleoprotein</keyword>
<keyword id="KW-0689">Ribosomal protein</keyword>
<keyword id="KW-0694">RNA-binding</keyword>
<keyword id="KW-0699">rRNA-binding</keyword>
<keyword id="KW-0820">tRNA-binding</keyword>
<gene>
    <name evidence="1" type="primary">rplP</name>
    <name type="ordered locus">Ecaj_0605</name>
</gene>
<name>RL16_EHRCJ</name>
<proteinExistence type="inferred from homology"/>
<comment type="function">
    <text evidence="1">Binds 23S rRNA and is also seen to make contacts with the A and possibly P site tRNAs.</text>
</comment>
<comment type="subunit">
    <text evidence="1">Part of the 50S ribosomal subunit.</text>
</comment>
<comment type="similarity">
    <text evidence="1">Belongs to the universal ribosomal protein uL16 family.</text>
</comment>
<organism>
    <name type="scientific">Ehrlichia canis (strain Jake)</name>
    <dbReference type="NCBI Taxonomy" id="269484"/>
    <lineage>
        <taxon>Bacteria</taxon>
        <taxon>Pseudomonadati</taxon>
        <taxon>Pseudomonadota</taxon>
        <taxon>Alphaproteobacteria</taxon>
        <taxon>Rickettsiales</taxon>
        <taxon>Anaplasmataceae</taxon>
        <taxon>Ehrlichia</taxon>
    </lineage>
</organism>
<protein>
    <recommendedName>
        <fullName evidence="1">Large ribosomal subunit protein uL16</fullName>
    </recommendedName>
    <alternativeName>
        <fullName evidence="2">50S ribosomal protein L16</fullName>
    </alternativeName>
</protein>
<feature type="chain" id="PRO_0000062096" description="Large ribosomal subunit protein uL16">
    <location>
        <begin position="1"/>
        <end position="136"/>
    </location>
</feature>
<sequence>MFIPKKTKYKKDFKGRISGNAKGGYTLSFGSYGLKALEPCRLTSKQIESARRSISRTLKRVGKVWIRAFCHTSVSKKPMDVRMGKGKGSVEMWVCKVKPGKILFEISGVSLNLAREALNKAQAKLPMKCKFVSDEL</sequence>
<reference key="1">
    <citation type="journal article" date="2006" name="J. Bacteriol.">
        <title>The genome of the obligately intracellular bacterium Ehrlichia canis reveals themes of complex membrane structure and immune evasion strategies.</title>
        <authorList>
            <person name="Mavromatis K."/>
            <person name="Doyle C.K."/>
            <person name="Lykidis A."/>
            <person name="Ivanova N."/>
            <person name="Francino M.P."/>
            <person name="Chain P."/>
            <person name="Shin M."/>
            <person name="Malfatti S."/>
            <person name="Larimer F."/>
            <person name="Copeland A."/>
            <person name="Detter J.C."/>
            <person name="Land M."/>
            <person name="Richardson P.M."/>
            <person name="Yu X.J."/>
            <person name="Walker D.H."/>
            <person name="McBride J.W."/>
            <person name="Kyrpides N.C."/>
        </authorList>
    </citation>
    <scope>NUCLEOTIDE SEQUENCE [LARGE SCALE GENOMIC DNA]</scope>
    <source>
        <strain>Jake</strain>
    </source>
</reference>